<comment type="function">
    <text evidence="1">Guanine-nucleotide exchange factor (GEF) that acts as an activator of Rop (Rho of plants) GTPases by promoting the exchange of GDP for GTP.</text>
</comment>
<comment type="domain">
    <text evidence="1">The PRONE (plant-specific Rop nucleotide exchanger) domain is responsible for the GEF activity.</text>
</comment>
<proteinExistence type="evidence at transcript level"/>
<reference key="1">
    <citation type="journal article" date="2000" name="Nature">
        <title>Sequence and analysis of chromosome 3 of the plant Arabidopsis thaliana.</title>
        <authorList>
            <person name="Salanoubat M."/>
            <person name="Lemcke K."/>
            <person name="Rieger M."/>
            <person name="Ansorge W."/>
            <person name="Unseld M."/>
            <person name="Fartmann B."/>
            <person name="Valle G."/>
            <person name="Bloecker H."/>
            <person name="Perez-Alonso M."/>
            <person name="Obermaier B."/>
            <person name="Delseny M."/>
            <person name="Boutry M."/>
            <person name="Grivell L.A."/>
            <person name="Mache R."/>
            <person name="Puigdomenech P."/>
            <person name="De Simone V."/>
            <person name="Choisne N."/>
            <person name="Artiguenave F."/>
            <person name="Robert C."/>
            <person name="Brottier P."/>
            <person name="Wincker P."/>
            <person name="Cattolico L."/>
            <person name="Weissenbach J."/>
            <person name="Saurin W."/>
            <person name="Quetier F."/>
            <person name="Schaefer M."/>
            <person name="Mueller-Auer S."/>
            <person name="Gabel C."/>
            <person name="Fuchs M."/>
            <person name="Benes V."/>
            <person name="Wurmbach E."/>
            <person name="Drzonek H."/>
            <person name="Erfle H."/>
            <person name="Jordan N."/>
            <person name="Bangert S."/>
            <person name="Wiedelmann R."/>
            <person name="Kranz H."/>
            <person name="Voss H."/>
            <person name="Holland R."/>
            <person name="Brandt P."/>
            <person name="Nyakatura G."/>
            <person name="Vezzi A."/>
            <person name="D'Angelo M."/>
            <person name="Pallavicini A."/>
            <person name="Toppo S."/>
            <person name="Simionati B."/>
            <person name="Conrad A."/>
            <person name="Hornischer K."/>
            <person name="Kauer G."/>
            <person name="Loehnert T.-H."/>
            <person name="Nordsiek G."/>
            <person name="Reichelt J."/>
            <person name="Scharfe M."/>
            <person name="Schoen O."/>
            <person name="Bargues M."/>
            <person name="Terol J."/>
            <person name="Climent J."/>
            <person name="Navarro P."/>
            <person name="Collado C."/>
            <person name="Perez-Perez A."/>
            <person name="Ottenwaelder B."/>
            <person name="Duchemin D."/>
            <person name="Cooke R."/>
            <person name="Laudie M."/>
            <person name="Berger-Llauro C."/>
            <person name="Purnelle B."/>
            <person name="Masuy D."/>
            <person name="de Haan M."/>
            <person name="Maarse A.C."/>
            <person name="Alcaraz J.-P."/>
            <person name="Cottet A."/>
            <person name="Casacuberta E."/>
            <person name="Monfort A."/>
            <person name="Argiriou A."/>
            <person name="Flores M."/>
            <person name="Liguori R."/>
            <person name="Vitale D."/>
            <person name="Mannhaupt G."/>
            <person name="Haase D."/>
            <person name="Schoof H."/>
            <person name="Rudd S."/>
            <person name="Zaccaria P."/>
            <person name="Mewes H.-W."/>
            <person name="Mayer K.F.X."/>
            <person name="Kaul S."/>
            <person name="Town C.D."/>
            <person name="Koo H.L."/>
            <person name="Tallon L.J."/>
            <person name="Jenkins J."/>
            <person name="Rooney T."/>
            <person name="Rizzo M."/>
            <person name="Walts A."/>
            <person name="Utterback T."/>
            <person name="Fujii C.Y."/>
            <person name="Shea T.P."/>
            <person name="Creasy T.H."/>
            <person name="Haas B."/>
            <person name="Maiti R."/>
            <person name="Wu D."/>
            <person name="Peterson J."/>
            <person name="Van Aken S."/>
            <person name="Pai G."/>
            <person name="Militscher J."/>
            <person name="Sellers P."/>
            <person name="Gill J.E."/>
            <person name="Feldblyum T.V."/>
            <person name="Preuss D."/>
            <person name="Lin X."/>
            <person name="Nierman W.C."/>
            <person name="Salzberg S.L."/>
            <person name="White O."/>
            <person name="Venter J.C."/>
            <person name="Fraser C.M."/>
            <person name="Kaneko T."/>
            <person name="Nakamura Y."/>
            <person name="Sato S."/>
            <person name="Kato T."/>
            <person name="Asamizu E."/>
            <person name="Sasamoto S."/>
            <person name="Kimura T."/>
            <person name="Idesawa K."/>
            <person name="Kawashima K."/>
            <person name="Kishida Y."/>
            <person name="Kiyokawa C."/>
            <person name="Kohara M."/>
            <person name="Matsumoto M."/>
            <person name="Matsuno A."/>
            <person name="Muraki A."/>
            <person name="Nakayama S."/>
            <person name="Nakazaki N."/>
            <person name="Shinpo S."/>
            <person name="Takeuchi C."/>
            <person name="Wada T."/>
            <person name="Watanabe A."/>
            <person name="Yamada M."/>
            <person name="Yasuda M."/>
            <person name="Tabata S."/>
        </authorList>
    </citation>
    <scope>NUCLEOTIDE SEQUENCE [LARGE SCALE GENOMIC DNA]</scope>
    <source>
        <strain>cv. Columbia</strain>
    </source>
</reference>
<reference key="2">
    <citation type="journal article" date="2017" name="Plant J.">
        <title>Araport11: a complete reannotation of the Arabidopsis thaliana reference genome.</title>
        <authorList>
            <person name="Cheng C.Y."/>
            <person name="Krishnakumar V."/>
            <person name="Chan A.P."/>
            <person name="Thibaud-Nissen F."/>
            <person name="Schobel S."/>
            <person name="Town C.D."/>
        </authorList>
    </citation>
    <scope>GENOME REANNOTATION</scope>
    <source>
        <strain>cv. Columbia</strain>
    </source>
</reference>
<reference key="3">
    <citation type="submission" date="2004-12" db="EMBL/GenBank/DDBJ databases">
        <title>Arabidopsis ORF clones.</title>
        <authorList>
            <person name="Cheuk R.F."/>
            <person name="Chen H."/>
            <person name="Kim C.J."/>
            <person name="Shinn P."/>
            <person name="Ecker J.R."/>
        </authorList>
    </citation>
    <scope>NUCLEOTIDE SEQUENCE [LARGE SCALE MRNA]</scope>
    <source>
        <strain>cv. Columbia</strain>
    </source>
</reference>
<reference key="4">
    <citation type="submission" date="2005-02" db="EMBL/GenBank/DDBJ databases">
        <title>Arabidopsis ORF clone.</title>
        <authorList>
            <person name="Shinn P."/>
            <person name="Chen H."/>
            <person name="Cheuk R.F."/>
            <person name="Kim C.J."/>
            <person name="Ecker J.R."/>
        </authorList>
    </citation>
    <scope>NUCLEOTIDE SEQUENCE [LARGE SCALE MRNA]</scope>
    <source>
        <strain>cv. Columbia</strain>
    </source>
</reference>
<reference key="5">
    <citation type="journal article" date="2005" name="Nature">
        <title>A new family of RhoGEFs activates the Rop molecular switch in plants.</title>
        <authorList>
            <person name="Berken A."/>
            <person name="Thomas C."/>
            <person name="Wittinghofer A."/>
        </authorList>
    </citation>
    <scope>GENE FAMILY</scope>
</reference>
<protein>
    <recommendedName>
        <fullName>Rop guanine nucleotide exchange factor 6</fullName>
        <shortName>AtRopGEF6</shortName>
    </recommendedName>
    <alternativeName>
        <fullName>Rho of plants guanine nucleotide exchange factor 6</fullName>
    </alternativeName>
</protein>
<keyword id="KW-0344">Guanine-nucleotide releasing factor</keyword>
<keyword id="KW-1185">Reference proteome</keyword>
<sequence>MEDNSCIGFEGSKRFGETSKRIIGLIDSVTESTTDSSLSSSSSGVGSSSGRSSVAERSVSSPPTKSQILGWPLGQGSWRKSSGKMKKKTPTKIDDFGFKRVGTETSEIELLKERMAKLLLGEDMSGSGEGVCPALAISNAITNLYAAILGQQWRLEPIPSEKKLMWRREIEVLLSVSDHIVELVPSFQNFPNGNKIEVMNCRPRSDLFTCLPALRKLDNMLIEILDSFGETEFWYVDQGIVAAESARSNSFREDGDKWWLPLPRVPSDGLTEQTRKKLDHTREFTNQILKACMSINSIALAEMEVPQSYLEALPKNGRSCLGDFLYRNITSDNFSADHLLESIDLSSELAVVEMANRVEASMYVWRRRAHSRHLISLYRSTSTRWGMIVKEMMMHQTDGDKREIFAERAESLLIRLKQRFPGLRQTALDTSKIQYNKDVGKSILESYSRVLESLAYSIGVRIEEVLFMDDISKDDGDGDDDSCSDKLRLLSKEAASGGSGSLREKLSAPSLFSVSFSGTSTPYRTLSFSASTPSYSPMPLISPINGGRGGERAPFLSGRNIRERCGFGPKKALANYLRG</sequence>
<accession>Q9M056</accession>
<gene>
    <name type="primary">ROPGEF6</name>
    <name type="ordered locus">At3g55660</name>
    <name type="ORF">F1I16.70</name>
</gene>
<dbReference type="EMBL" id="AL161667">
    <property type="protein sequence ID" value="CAB81591.1"/>
    <property type="molecule type" value="Genomic_DNA"/>
</dbReference>
<dbReference type="EMBL" id="CP002686">
    <property type="protein sequence ID" value="AEE79417.1"/>
    <property type="molecule type" value="Genomic_DNA"/>
</dbReference>
<dbReference type="EMBL" id="BT020279">
    <property type="protein sequence ID" value="AAV84500.1"/>
    <property type="molecule type" value="mRNA"/>
</dbReference>
<dbReference type="EMBL" id="BT021117">
    <property type="protein sequence ID" value="AAX12887.1"/>
    <property type="molecule type" value="mRNA"/>
</dbReference>
<dbReference type="PIR" id="T47705">
    <property type="entry name" value="T47705"/>
</dbReference>
<dbReference type="RefSeq" id="NP_191125.1">
    <property type="nucleotide sequence ID" value="NM_115424.3"/>
</dbReference>
<dbReference type="SMR" id="Q9M056"/>
<dbReference type="FunCoup" id="Q9M056">
    <property type="interactions" value="25"/>
</dbReference>
<dbReference type="STRING" id="3702.Q9M056"/>
<dbReference type="PaxDb" id="3702-AT3G55660.1"/>
<dbReference type="EnsemblPlants" id="AT3G55660.1">
    <property type="protein sequence ID" value="AT3G55660.1"/>
    <property type="gene ID" value="AT3G55660"/>
</dbReference>
<dbReference type="GeneID" id="824732"/>
<dbReference type="Gramene" id="AT3G55660.1">
    <property type="protein sequence ID" value="AT3G55660.1"/>
    <property type="gene ID" value="AT3G55660"/>
</dbReference>
<dbReference type="KEGG" id="ath:AT3G55660"/>
<dbReference type="Araport" id="AT3G55660"/>
<dbReference type="TAIR" id="AT3G55660">
    <property type="gene designation" value="ROPGEF6"/>
</dbReference>
<dbReference type="eggNOG" id="ENOG502QPIY">
    <property type="taxonomic scope" value="Eukaryota"/>
</dbReference>
<dbReference type="HOGENOM" id="CLU_019073_2_0_1"/>
<dbReference type="InParanoid" id="Q9M056"/>
<dbReference type="OMA" id="FEGTEFW"/>
<dbReference type="PhylomeDB" id="Q9M056"/>
<dbReference type="PRO" id="PR:Q9M056"/>
<dbReference type="Proteomes" id="UP000006548">
    <property type="component" value="Chromosome 3"/>
</dbReference>
<dbReference type="ExpressionAtlas" id="Q9M056">
    <property type="expression patterns" value="baseline and differential"/>
</dbReference>
<dbReference type="GO" id="GO:0005085">
    <property type="term" value="F:guanyl-nucleotide exchange factor activity"/>
    <property type="evidence" value="ECO:0000250"/>
    <property type="project" value="TAIR"/>
</dbReference>
<dbReference type="FunFam" id="1.20.58.2010:FF:000001">
    <property type="entry name" value="Rop guanine nucleotide exchange factor 14"/>
    <property type="match status" value="1"/>
</dbReference>
<dbReference type="FunFam" id="1.20.58.2010:FF:000003">
    <property type="entry name" value="Rop guanine nucleotide exchange factor 14"/>
    <property type="match status" value="1"/>
</dbReference>
<dbReference type="Gene3D" id="1.20.58.2010">
    <property type="entry name" value="PRONE domain, subdomain 1"/>
    <property type="match status" value="2"/>
</dbReference>
<dbReference type="InterPro" id="IPR005512">
    <property type="entry name" value="PRONE_dom"/>
</dbReference>
<dbReference type="InterPro" id="IPR038937">
    <property type="entry name" value="RopGEF"/>
</dbReference>
<dbReference type="PANTHER" id="PTHR33101">
    <property type="entry name" value="ROP GUANINE NUCLEOTIDE EXCHANGE FACTOR 1"/>
    <property type="match status" value="1"/>
</dbReference>
<dbReference type="PANTHER" id="PTHR33101:SF43">
    <property type="entry name" value="ROP GUANINE NUCLEOTIDE EXCHANGE FACTOR 6"/>
    <property type="match status" value="1"/>
</dbReference>
<dbReference type="Pfam" id="PF03759">
    <property type="entry name" value="PRONE"/>
    <property type="match status" value="1"/>
</dbReference>
<dbReference type="PROSITE" id="PS51334">
    <property type="entry name" value="PRONE"/>
    <property type="match status" value="1"/>
</dbReference>
<name>ROFG6_ARATH</name>
<organism>
    <name type="scientific">Arabidopsis thaliana</name>
    <name type="common">Mouse-ear cress</name>
    <dbReference type="NCBI Taxonomy" id="3702"/>
    <lineage>
        <taxon>Eukaryota</taxon>
        <taxon>Viridiplantae</taxon>
        <taxon>Streptophyta</taxon>
        <taxon>Embryophyta</taxon>
        <taxon>Tracheophyta</taxon>
        <taxon>Spermatophyta</taxon>
        <taxon>Magnoliopsida</taxon>
        <taxon>eudicotyledons</taxon>
        <taxon>Gunneridae</taxon>
        <taxon>Pentapetalae</taxon>
        <taxon>rosids</taxon>
        <taxon>malvids</taxon>
        <taxon>Brassicales</taxon>
        <taxon>Brassicaceae</taxon>
        <taxon>Camelineae</taxon>
        <taxon>Arabidopsis</taxon>
    </lineage>
</organism>
<evidence type="ECO:0000250" key="1"/>
<evidence type="ECO:0000255" key="2">
    <source>
        <dbReference type="PROSITE-ProRule" id="PRU00663"/>
    </source>
</evidence>
<evidence type="ECO:0000256" key="3">
    <source>
        <dbReference type="SAM" id="MobiDB-lite"/>
    </source>
</evidence>
<feature type="chain" id="PRO_0000423892" description="Rop guanine nucleotide exchange factor 6">
    <location>
        <begin position="1"/>
        <end position="579"/>
    </location>
</feature>
<feature type="domain" description="PRONE" evidence="2">
    <location>
        <begin position="98"/>
        <end position="479"/>
    </location>
</feature>
<feature type="region of interest" description="Disordered" evidence="3">
    <location>
        <begin position="31"/>
        <end position="89"/>
    </location>
</feature>
<feature type="compositionally biased region" description="Low complexity" evidence="3">
    <location>
        <begin position="31"/>
        <end position="61"/>
    </location>
</feature>